<organism>
    <name type="scientific">Protophormia terraenovae</name>
    <name type="common">Northern blowfly</name>
    <name type="synonym">Lucilia terraenovae</name>
    <dbReference type="NCBI Taxonomy" id="34676"/>
    <lineage>
        <taxon>Eukaryota</taxon>
        <taxon>Metazoa</taxon>
        <taxon>Ecdysozoa</taxon>
        <taxon>Arthropoda</taxon>
        <taxon>Hexapoda</taxon>
        <taxon>Insecta</taxon>
        <taxon>Pterygota</taxon>
        <taxon>Neoptera</taxon>
        <taxon>Endopterygota</taxon>
        <taxon>Diptera</taxon>
        <taxon>Brachycera</taxon>
        <taxon>Muscomorpha</taxon>
        <taxon>Oestroidea</taxon>
        <taxon>Calliphoridae</taxon>
        <taxon>Chrysomyinae</taxon>
        <taxon>Protophormia</taxon>
    </lineage>
</organism>
<name>AKH_PROTE</name>
<protein>
    <recommendedName>
        <fullName>Adipokinetic hormone</fullName>
        <shortName>AKH</shortName>
    </recommendedName>
    <alternativeName>
        <fullName>Hypertrehalosaemic hormone</fullName>
        <shortName>HRTH</shortName>
    </alternativeName>
</protein>
<gene>
    <name type="primary">AKH</name>
</gene>
<sequence>QLTFSPDW</sequence>
<keyword id="KW-0027">Amidation</keyword>
<keyword id="KW-0903">Direct protein sequencing</keyword>
<keyword id="KW-0372">Hormone</keyword>
<keyword id="KW-0527">Neuropeptide</keyword>
<keyword id="KW-0873">Pyrrolidone carboxylic acid</keyword>
<keyword id="KW-0964">Secreted</keyword>
<proteinExistence type="evidence at protein level"/>
<evidence type="ECO:0000269" key="1">
    <source>
    </source>
</evidence>
<evidence type="ECO:0000305" key="2"/>
<comment type="function">
    <text>Probably causes a marked increase in hemolymph carbohydrate.</text>
</comment>
<comment type="subcellular location">
    <subcellularLocation>
        <location>Secreted</location>
    </subcellularLocation>
</comment>
<comment type="similarity">
    <text evidence="2">Belongs to the AKH/HRTH/RPCH family.</text>
</comment>
<dbReference type="PIR" id="S11545">
    <property type="entry name" value="S11545"/>
</dbReference>
<dbReference type="GO" id="GO:0005576">
    <property type="term" value="C:extracellular region"/>
    <property type="evidence" value="ECO:0007669"/>
    <property type="project" value="UniProtKB-SubCell"/>
</dbReference>
<dbReference type="GO" id="GO:0005179">
    <property type="term" value="F:hormone activity"/>
    <property type="evidence" value="ECO:0007669"/>
    <property type="project" value="UniProtKB-KW"/>
</dbReference>
<dbReference type="GO" id="GO:0007218">
    <property type="term" value="P:neuropeptide signaling pathway"/>
    <property type="evidence" value="ECO:0007669"/>
    <property type="project" value="UniProtKB-KW"/>
</dbReference>
<dbReference type="InterPro" id="IPR002047">
    <property type="entry name" value="Adipokinetic_hormone_CS"/>
</dbReference>
<dbReference type="PROSITE" id="PS00256">
    <property type="entry name" value="AKH"/>
    <property type="match status" value="1"/>
</dbReference>
<accession>P61856</accession>
<accession>P17975</accession>
<accession>Q9VZH6</accession>
<feature type="peptide" id="PRO_0000043443" description="Adipokinetic hormone">
    <location>
        <begin position="1"/>
        <end position="8"/>
    </location>
</feature>
<feature type="modified residue" description="Pyrrolidone carboxylic acid" evidence="1">
    <location>
        <position position="1"/>
    </location>
</feature>
<feature type="modified residue" description="Tryptophan amide" evidence="1">
    <location>
        <position position="8"/>
    </location>
</feature>
<reference key="1">
    <citation type="journal article" date="1990" name="Biochem. J.">
        <title>Isolation and structure of a novel charged member of the red-pigment-concentrating hormone-adipokinetic hormone family of peptides isolated from the corpora cardiaca of the blowfly Phormia terraenovae (Diptera).</title>
        <authorList>
            <person name="Gaede G."/>
            <person name="Wilps H."/>
            <person name="Kellner R."/>
        </authorList>
    </citation>
    <scope>PROTEIN SEQUENCE</scope>
    <scope>PYROGLUTAMATE FORMATION AT GLN-1</scope>
    <scope>AMIDATION AT TRP-8</scope>
    <source>
        <tissue>Corpora cardiaca</tissue>
    </source>
</reference>